<feature type="chain" id="PRO_0000291804" description="Mitochondrial glycine transporter">
    <location>
        <begin position="1"/>
        <end position="326"/>
    </location>
</feature>
<feature type="transmembrane region" description="Helical; Name=1" evidence="3">
    <location>
        <begin position="51"/>
        <end position="76"/>
    </location>
</feature>
<feature type="transmembrane region" description="Helical; Name=2" evidence="3">
    <location>
        <begin position="109"/>
        <end position="135"/>
    </location>
</feature>
<feature type="transmembrane region" description="Helical; Name=3" evidence="3">
    <location>
        <begin position="147"/>
        <end position="172"/>
    </location>
</feature>
<feature type="transmembrane region" description="Helical; Name=4" evidence="3">
    <location>
        <begin position="200"/>
        <end position="223"/>
    </location>
</feature>
<feature type="transmembrane region" description="Helical; Name=5" evidence="3">
    <location>
        <begin position="241"/>
        <end position="267"/>
    </location>
</feature>
<feature type="transmembrane region" description="Helical; Name=6" evidence="3">
    <location>
        <begin position="296"/>
        <end position="314"/>
    </location>
</feature>
<feature type="repeat" description="Solcar 1" evidence="3">
    <location>
        <begin position="45"/>
        <end position="134"/>
    </location>
</feature>
<feature type="repeat" description="Solcar 2" evidence="3">
    <location>
        <begin position="141"/>
        <end position="225"/>
    </location>
</feature>
<feature type="repeat" description="Solcar 3" evidence="3">
    <location>
        <begin position="237"/>
        <end position="321"/>
    </location>
</feature>
<feature type="sequence conflict" description="In Ref. 2; AAH99762." evidence="4" ref="2">
    <original>S</original>
    <variation>T</variation>
    <location>
        <position position="102"/>
    </location>
</feature>
<protein>
    <recommendedName>
        <fullName evidence="3">Mitochondrial glycine transporter</fullName>
    </recommendedName>
    <alternativeName>
        <fullName evidence="3">Solute carrier family 25 member 38</fullName>
    </alternativeName>
</protein>
<reference key="1">
    <citation type="journal article" date="2004" name="Nature">
        <title>Genome sequence of the Brown Norway rat yields insights into mammalian evolution.</title>
        <authorList>
            <person name="Gibbs R.A."/>
            <person name="Weinstock G.M."/>
            <person name="Metzker M.L."/>
            <person name="Muzny D.M."/>
            <person name="Sodergren E.J."/>
            <person name="Scherer S."/>
            <person name="Scott G."/>
            <person name="Steffen D."/>
            <person name="Worley K.C."/>
            <person name="Burch P.E."/>
            <person name="Okwuonu G."/>
            <person name="Hines S."/>
            <person name="Lewis L."/>
            <person name="Deramo C."/>
            <person name="Delgado O."/>
            <person name="Dugan-Rocha S."/>
            <person name="Miner G."/>
            <person name="Morgan M."/>
            <person name="Hawes A."/>
            <person name="Gill R."/>
            <person name="Holt R.A."/>
            <person name="Adams M.D."/>
            <person name="Amanatides P.G."/>
            <person name="Baden-Tillson H."/>
            <person name="Barnstead M."/>
            <person name="Chin S."/>
            <person name="Evans C.A."/>
            <person name="Ferriera S."/>
            <person name="Fosler C."/>
            <person name="Glodek A."/>
            <person name="Gu Z."/>
            <person name="Jennings D."/>
            <person name="Kraft C.L."/>
            <person name="Nguyen T."/>
            <person name="Pfannkoch C.M."/>
            <person name="Sitter C."/>
            <person name="Sutton G.G."/>
            <person name="Venter J.C."/>
            <person name="Woodage T."/>
            <person name="Smith D."/>
            <person name="Lee H.-M."/>
            <person name="Gustafson E."/>
            <person name="Cahill P."/>
            <person name="Kana A."/>
            <person name="Doucette-Stamm L."/>
            <person name="Weinstock K."/>
            <person name="Fechtel K."/>
            <person name="Weiss R.B."/>
            <person name="Dunn D.M."/>
            <person name="Green E.D."/>
            <person name="Blakesley R.W."/>
            <person name="Bouffard G.G."/>
            <person name="De Jong P.J."/>
            <person name="Osoegawa K."/>
            <person name="Zhu B."/>
            <person name="Marra M."/>
            <person name="Schein J."/>
            <person name="Bosdet I."/>
            <person name="Fjell C."/>
            <person name="Jones S."/>
            <person name="Krzywinski M."/>
            <person name="Mathewson C."/>
            <person name="Siddiqui A."/>
            <person name="Wye N."/>
            <person name="McPherson J."/>
            <person name="Zhao S."/>
            <person name="Fraser C.M."/>
            <person name="Shetty J."/>
            <person name="Shatsman S."/>
            <person name="Geer K."/>
            <person name="Chen Y."/>
            <person name="Abramzon S."/>
            <person name="Nierman W.C."/>
            <person name="Havlak P.H."/>
            <person name="Chen R."/>
            <person name="Durbin K.J."/>
            <person name="Egan A."/>
            <person name="Ren Y."/>
            <person name="Song X.-Z."/>
            <person name="Li B."/>
            <person name="Liu Y."/>
            <person name="Qin X."/>
            <person name="Cawley S."/>
            <person name="Cooney A.J."/>
            <person name="D'Souza L.M."/>
            <person name="Martin K."/>
            <person name="Wu J.Q."/>
            <person name="Gonzalez-Garay M.L."/>
            <person name="Jackson A.R."/>
            <person name="Kalafus K.J."/>
            <person name="McLeod M.P."/>
            <person name="Milosavljevic A."/>
            <person name="Virk D."/>
            <person name="Volkov A."/>
            <person name="Wheeler D.A."/>
            <person name="Zhang Z."/>
            <person name="Bailey J.A."/>
            <person name="Eichler E.E."/>
            <person name="Tuzun E."/>
            <person name="Birney E."/>
            <person name="Mongin E."/>
            <person name="Ureta-Vidal A."/>
            <person name="Woodwark C."/>
            <person name="Zdobnov E."/>
            <person name="Bork P."/>
            <person name="Suyama M."/>
            <person name="Torrents D."/>
            <person name="Alexandersson M."/>
            <person name="Trask B.J."/>
            <person name="Young J.M."/>
            <person name="Huang H."/>
            <person name="Wang H."/>
            <person name="Xing H."/>
            <person name="Daniels S."/>
            <person name="Gietzen D."/>
            <person name="Schmidt J."/>
            <person name="Stevens K."/>
            <person name="Vitt U."/>
            <person name="Wingrove J."/>
            <person name="Camara F."/>
            <person name="Mar Alba M."/>
            <person name="Abril J.F."/>
            <person name="Guigo R."/>
            <person name="Smit A."/>
            <person name="Dubchak I."/>
            <person name="Rubin E.M."/>
            <person name="Couronne O."/>
            <person name="Poliakov A."/>
            <person name="Huebner N."/>
            <person name="Ganten D."/>
            <person name="Goesele C."/>
            <person name="Hummel O."/>
            <person name="Kreitler T."/>
            <person name="Lee Y.-A."/>
            <person name="Monti J."/>
            <person name="Schulz H."/>
            <person name="Zimdahl H."/>
            <person name="Himmelbauer H."/>
            <person name="Lehrach H."/>
            <person name="Jacob H.J."/>
            <person name="Bromberg S."/>
            <person name="Gullings-Handley J."/>
            <person name="Jensen-Seaman M.I."/>
            <person name="Kwitek A.E."/>
            <person name="Lazar J."/>
            <person name="Pasko D."/>
            <person name="Tonellato P.J."/>
            <person name="Twigger S."/>
            <person name="Ponting C.P."/>
            <person name="Duarte J.M."/>
            <person name="Rice S."/>
            <person name="Goodstadt L."/>
            <person name="Beatson S.A."/>
            <person name="Emes R.D."/>
            <person name="Winter E.E."/>
            <person name="Webber C."/>
            <person name="Brandt P."/>
            <person name="Nyakatura G."/>
            <person name="Adetobi M."/>
            <person name="Chiaromonte F."/>
            <person name="Elnitski L."/>
            <person name="Eswara P."/>
            <person name="Hardison R.C."/>
            <person name="Hou M."/>
            <person name="Kolbe D."/>
            <person name="Makova K."/>
            <person name="Miller W."/>
            <person name="Nekrutenko A."/>
            <person name="Riemer C."/>
            <person name="Schwartz S."/>
            <person name="Taylor J."/>
            <person name="Yang S."/>
            <person name="Zhang Y."/>
            <person name="Lindpaintner K."/>
            <person name="Andrews T.D."/>
            <person name="Caccamo M."/>
            <person name="Clamp M."/>
            <person name="Clarke L."/>
            <person name="Curwen V."/>
            <person name="Durbin R.M."/>
            <person name="Eyras E."/>
            <person name="Searle S.M."/>
            <person name="Cooper G.M."/>
            <person name="Batzoglou S."/>
            <person name="Brudno M."/>
            <person name="Sidow A."/>
            <person name="Stone E.A."/>
            <person name="Payseur B.A."/>
            <person name="Bourque G."/>
            <person name="Lopez-Otin C."/>
            <person name="Puente X.S."/>
            <person name="Chakrabarti K."/>
            <person name="Chatterji S."/>
            <person name="Dewey C."/>
            <person name="Pachter L."/>
            <person name="Bray N."/>
            <person name="Yap V.B."/>
            <person name="Caspi A."/>
            <person name="Tesler G."/>
            <person name="Pevzner P.A."/>
            <person name="Haussler D."/>
            <person name="Roskin K.M."/>
            <person name="Baertsch R."/>
            <person name="Clawson H."/>
            <person name="Furey T.S."/>
            <person name="Hinrichs A.S."/>
            <person name="Karolchik D."/>
            <person name="Kent W.J."/>
            <person name="Rosenbloom K.R."/>
            <person name="Trumbower H."/>
            <person name="Weirauch M."/>
            <person name="Cooper D.N."/>
            <person name="Stenson P.D."/>
            <person name="Ma B."/>
            <person name="Brent M."/>
            <person name="Arumugam M."/>
            <person name="Shteynberg D."/>
            <person name="Copley R.R."/>
            <person name="Taylor M.S."/>
            <person name="Riethman H."/>
            <person name="Mudunuri U."/>
            <person name="Peterson J."/>
            <person name="Guyer M."/>
            <person name="Felsenfeld A."/>
            <person name="Old S."/>
            <person name="Mockrin S."/>
            <person name="Collins F.S."/>
        </authorList>
    </citation>
    <scope>NUCLEOTIDE SEQUENCE [LARGE SCALE GENOMIC DNA]</scope>
    <source>
        <strain>Brown Norway</strain>
    </source>
</reference>
<reference key="2">
    <citation type="journal article" date="2004" name="Genome Res.">
        <title>The status, quality, and expansion of the NIH full-length cDNA project: the Mammalian Gene Collection (MGC).</title>
        <authorList>
            <consortium name="The MGC Project Team"/>
        </authorList>
    </citation>
    <scope>NUCLEOTIDE SEQUENCE [LARGE SCALE MRNA]</scope>
    <source>
        <tissue>Prostate</tissue>
    </source>
</reference>
<name>S2538_RAT</name>
<comment type="function">
    <text evidence="3">Mitochondrial glycine transporter that imports glycine into the mitochondrial matrix. Plays an important role in providing glycine for the first enzymatic step in heme biosynthesis, the condensation of glycine with succinyl-CoA to produce 5-aminolevulinate (ALA) in the mitochondrial matrix. Required during erythropoiesis.</text>
</comment>
<comment type="function">
    <text evidence="1">Plays a role as pro-apoptotic protein that induces caspase-dependent apoptosis.</text>
</comment>
<comment type="catalytic activity">
    <reaction evidence="2">
        <text>glycine(in) = glycine(out)</text>
        <dbReference type="Rhea" id="RHEA:70715"/>
        <dbReference type="ChEBI" id="CHEBI:57305"/>
    </reaction>
</comment>
<comment type="subcellular location">
    <subcellularLocation>
        <location evidence="3">Mitochondrion inner membrane</location>
        <topology evidence="3">Multi-pass membrane protein</topology>
    </subcellularLocation>
</comment>
<comment type="similarity">
    <text evidence="3">Belongs to the mitochondrial carrier (TC 2.A.29) family. SLC25A38 subfamily.</text>
</comment>
<sequence length="326" mass="35230">MGVSAEPRSLSVARAGLASPVIEKARSALLPSQDVEDTVETLMLHPVIKAFLCGSISGTCSTLLFQPLDLLKTRLQTLQPSDVGPRRVGMLSVFLKVVRTESLLGLWKGMSPSIVRCVPGVGIYFGTLYSSKQYFLRGHPPTALESVILGMGSRSVAGVCMSPITVVKTRYESGAYSYESVYAALRSIYCSEGSRGLFRGLTATLLRDAPFSGLYLMFYSQTRATVLHGADELDAALMPLVNFSCGVFAGILASLVTQPADVIKTHMQLSTVKCQCIGQVATLILKTHGLRGFFHGSVPRALRRTLMAAMAWTVYEEMMAKMGLKS</sequence>
<evidence type="ECO:0000250" key="1">
    <source>
        <dbReference type="UniProtKB" id="Q91XD8"/>
    </source>
</evidence>
<evidence type="ECO:0000250" key="2">
    <source>
        <dbReference type="UniProtKB" id="Q96DW6"/>
    </source>
</evidence>
<evidence type="ECO:0000255" key="3">
    <source>
        <dbReference type="HAMAP-Rule" id="MF_03064"/>
    </source>
</evidence>
<evidence type="ECO:0000305" key="4"/>
<dbReference type="EMBL" id="AABR06057577">
    <property type="status" value="NOT_ANNOTATED_CDS"/>
    <property type="molecule type" value="Genomic_DNA"/>
</dbReference>
<dbReference type="EMBL" id="AABR06057578">
    <property type="status" value="NOT_ANNOTATED_CDS"/>
    <property type="molecule type" value="Genomic_DNA"/>
</dbReference>
<dbReference type="EMBL" id="CH473954">
    <property type="protein sequence ID" value="EDL76885.1"/>
    <property type="molecule type" value="Genomic_DNA"/>
</dbReference>
<dbReference type="EMBL" id="BC099762">
    <property type="protein sequence ID" value="AAH99762.1"/>
    <property type="molecule type" value="mRNA"/>
</dbReference>
<dbReference type="RefSeq" id="NP_001025203.2">
    <property type="nucleotide sequence ID" value="NM_001030032.2"/>
</dbReference>
<dbReference type="SMR" id="Q499U1"/>
<dbReference type="FunCoup" id="Q499U1">
    <property type="interactions" value="839"/>
</dbReference>
<dbReference type="STRING" id="10116.ENSRNOP00000025142"/>
<dbReference type="PhosphoSitePlus" id="Q499U1"/>
<dbReference type="PaxDb" id="10116-ENSRNOP00000025142"/>
<dbReference type="GeneID" id="301067"/>
<dbReference type="KEGG" id="rno:301067"/>
<dbReference type="UCSC" id="RGD:1311914">
    <property type="organism name" value="rat"/>
</dbReference>
<dbReference type="AGR" id="RGD:1311914"/>
<dbReference type="CTD" id="54977"/>
<dbReference type="RGD" id="1311914">
    <property type="gene designation" value="Slc25a38"/>
</dbReference>
<dbReference type="VEuPathDB" id="HostDB:ENSRNOG00000018552"/>
<dbReference type="eggNOG" id="KOG0766">
    <property type="taxonomic scope" value="Eukaryota"/>
</dbReference>
<dbReference type="InParanoid" id="Q499U1"/>
<dbReference type="OrthoDB" id="1924968at2759"/>
<dbReference type="TreeFam" id="TF332793"/>
<dbReference type="PRO" id="PR:Q499U1"/>
<dbReference type="Proteomes" id="UP000002494">
    <property type="component" value="Chromosome 8"/>
</dbReference>
<dbReference type="Proteomes" id="UP000234681">
    <property type="component" value="Chromosome 8"/>
</dbReference>
<dbReference type="Bgee" id="ENSRNOG00000018552">
    <property type="expression patterns" value="Expressed in pancreas and 19 other cell types or tissues"/>
</dbReference>
<dbReference type="ExpressionAtlas" id="Q499U1">
    <property type="expression patterns" value="baseline and differential"/>
</dbReference>
<dbReference type="GO" id="GO:0005743">
    <property type="term" value="C:mitochondrial inner membrane"/>
    <property type="evidence" value="ECO:0000250"/>
    <property type="project" value="UniProtKB"/>
</dbReference>
<dbReference type="GO" id="GO:0005739">
    <property type="term" value="C:mitochondrion"/>
    <property type="evidence" value="ECO:0000318"/>
    <property type="project" value="GO_Central"/>
</dbReference>
<dbReference type="GO" id="GO:0015187">
    <property type="term" value="F:glycine transmembrane transporter activity"/>
    <property type="evidence" value="ECO:0000266"/>
    <property type="project" value="RGD"/>
</dbReference>
<dbReference type="GO" id="GO:0030218">
    <property type="term" value="P:erythrocyte differentiation"/>
    <property type="evidence" value="ECO:0000250"/>
    <property type="project" value="UniProtKB"/>
</dbReference>
<dbReference type="GO" id="GO:1904983">
    <property type="term" value="P:glycine import into mitochondrion"/>
    <property type="evidence" value="ECO:0000266"/>
    <property type="project" value="RGD"/>
</dbReference>
<dbReference type="FunFam" id="1.50.40.10:FF:000036">
    <property type="entry name" value="Mitochondrial glycine transporter B"/>
    <property type="match status" value="1"/>
</dbReference>
<dbReference type="Gene3D" id="1.50.40.10">
    <property type="entry name" value="Mitochondrial carrier domain"/>
    <property type="match status" value="1"/>
</dbReference>
<dbReference type="HAMAP" id="MF_03064">
    <property type="entry name" value="SLC25A38"/>
    <property type="match status" value="1"/>
</dbReference>
<dbReference type="InterPro" id="IPR030847">
    <property type="entry name" value="Hem25/SLC25A38"/>
</dbReference>
<dbReference type="InterPro" id="IPR002067">
    <property type="entry name" value="Mit_carrier"/>
</dbReference>
<dbReference type="InterPro" id="IPR018108">
    <property type="entry name" value="Mitochondrial_sb/sol_carrier"/>
</dbReference>
<dbReference type="InterPro" id="IPR023395">
    <property type="entry name" value="Mt_carrier_dom_sf"/>
</dbReference>
<dbReference type="PANTHER" id="PTHR46181">
    <property type="entry name" value="MITOCHONDRIAL GLYCINE TRANSPORTER"/>
    <property type="match status" value="1"/>
</dbReference>
<dbReference type="PANTHER" id="PTHR46181:SF3">
    <property type="entry name" value="MITOCHONDRIAL GLYCINE TRANSPORTER"/>
    <property type="match status" value="1"/>
</dbReference>
<dbReference type="Pfam" id="PF00153">
    <property type="entry name" value="Mito_carr"/>
    <property type="match status" value="3"/>
</dbReference>
<dbReference type="PRINTS" id="PR00926">
    <property type="entry name" value="MITOCARRIER"/>
</dbReference>
<dbReference type="SUPFAM" id="SSF103506">
    <property type="entry name" value="Mitochondrial carrier"/>
    <property type="match status" value="1"/>
</dbReference>
<dbReference type="PROSITE" id="PS50920">
    <property type="entry name" value="SOLCAR"/>
    <property type="match status" value="3"/>
</dbReference>
<organism>
    <name type="scientific">Rattus norvegicus</name>
    <name type="common">Rat</name>
    <dbReference type="NCBI Taxonomy" id="10116"/>
    <lineage>
        <taxon>Eukaryota</taxon>
        <taxon>Metazoa</taxon>
        <taxon>Chordata</taxon>
        <taxon>Craniata</taxon>
        <taxon>Vertebrata</taxon>
        <taxon>Euteleostomi</taxon>
        <taxon>Mammalia</taxon>
        <taxon>Eutheria</taxon>
        <taxon>Euarchontoglires</taxon>
        <taxon>Glires</taxon>
        <taxon>Rodentia</taxon>
        <taxon>Myomorpha</taxon>
        <taxon>Muroidea</taxon>
        <taxon>Muridae</taxon>
        <taxon>Murinae</taxon>
        <taxon>Rattus</taxon>
    </lineage>
</organism>
<gene>
    <name evidence="3" type="primary">Slc25a38</name>
</gene>
<keyword id="KW-0472">Membrane</keyword>
<keyword id="KW-0496">Mitochondrion</keyword>
<keyword id="KW-0999">Mitochondrion inner membrane</keyword>
<keyword id="KW-1185">Reference proteome</keyword>
<keyword id="KW-0677">Repeat</keyword>
<keyword id="KW-0812">Transmembrane</keyword>
<keyword id="KW-1133">Transmembrane helix</keyword>
<keyword id="KW-0813">Transport</keyword>
<accession>Q499U1</accession>
<accession>G3V8E7</accession>
<proteinExistence type="evidence at transcript level"/>